<proteinExistence type="inferred from homology"/>
<dbReference type="EC" id="7.3.2.5" evidence="1"/>
<dbReference type="EMBL" id="X69077">
    <property type="protein sequence ID" value="CAA48821.1"/>
    <property type="status" value="ALT_INIT"/>
    <property type="molecule type" value="Genomic_DNA"/>
</dbReference>
<dbReference type="PIR" id="S31045">
    <property type="entry name" value="S31045"/>
</dbReference>
<dbReference type="RefSeq" id="WP_012703506.1">
    <property type="nucleotide sequence ID" value="NZ_FPKM01000015.1"/>
</dbReference>
<dbReference type="SMR" id="P37732"/>
<dbReference type="GeneID" id="88187900"/>
<dbReference type="GO" id="GO:0005886">
    <property type="term" value="C:plasma membrane"/>
    <property type="evidence" value="ECO:0007669"/>
    <property type="project" value="UniProtKB-SubCell"/>
</dbReference>
<dbReference type="GO" id="GO:0015412">
    <property type="term" value="F:ABC-type molybdate transporter activity"/>
    <property type="evidence" value="ECO:0007669"/>
    <property type="project" value="UniProtKB-EC"/>
</dbReference>
<dbReference type="GO" id="GO:0005524">
    <property type="term" value="F:ATP binding"/>
    <property type="evidence" value="ECO:0007669"/>
    <property type="project" value="UniProtKB-KW"/>
</dbReference>
<dbReference type="GO" id="GO:0016887">
    <property type="term" value="F:ATP hydrolysis activity"/>
    <property type="evidence" value="ECO:0007669"/>
    <property type="project" value="InterPro"/>
</dbReference>
<dbReference type="FunFam" id="3.40.50.300:FF:000634">
    <property type="entry name" value="Molybdenum import ATP-binding protein ModC"/>
    <property type="match status" value="1"/>
</dbReference>
<dbReference type="Gene3D" id="2.40.50.100">
    <property type="match status" value="1"/>
</dbReference>
<dbReference type="Gene3D" id="3.40.50.300">
    <property type="entry name" value="P-loop containing nucleotide triphosphate hydrolases"/>
    <property type="match status" value="1"/>
</dbReference>
<dbReference type="InterPro" id="IPR003593">
    <property type="entry name" value="AAA+_ATPase"/>
</dbReference>
<dbReference type="InterPro" id="IPR003439">
    <property type="entry name" value="ABC_transporter-like_ATP-bd"/>
</dbReference>
<dbReference type="InterPro" id="IPR017871">
    <property type="entry name" value="ABC_transporter-like_CS"/>
</dbReference>
<dbReference type="InterPro" id="IPR008995">
    <property type="entry name" value="Mo/tungstate-bd_C_term_dom"/>
</dbReference>
<dbReference type="InterPro" id="IPR011868">
    <property type="entry name" value="ModC_ABC_ATP-bd"/>
</dbReference>
<dbReference type="InterPro" id="IPR050334">
    <property type="entry name" value="Molybdenum_import_ModC"/>
</dbReference>
<dbReference type="InterPro" id="IPR004606">
    <property type="entry name" value="Mop_domain"/>
</dbReference>
<dbReference type="InterPro" id="IPR027417">
    <property type="entry name" value="P-loop_NTPase"/>
</dbReference>
<dbReference type="InterPro" id="IPR005116">
    <property type="entry name" value="Transp-assoc_OB_typ1"/>
</dbReference>
<dbReference type="NCBIfam" id="TIGR02142">
    <property type="entry name" value="modC_ABC"/>
    <property type="match status" value="1"/>
</dbReference>
<dbReference type="PANTHER" id="PTHR43514">
    <property type="entry name" value="ABC TRANSPORTER I FAMILY MEMBER 10"/>
    <property type="match status" value="1"/>
</dbReference>
<dbReference type="PANTHER" id="PTHR43514:SF10">
    <property type="entry name" value="MOLYBDENUM IMPORT ATP-BINDING PROTEIN MODC 2"/>
    <property type="match status" value="1"/>
</dbReference>
<dbReference type="Pfam" id="PF00005">
    <property type="entry name" value="ABC_tran"/>
    <property type="match status" value="1"/>
</dbReference>
<dbReference type="Pfam" id="PF03459">
    <property type="entry name" value="TOBE"/>
    <property type="match status" value="1"/>
</dbReference>
<dbReference type="SMART" id="SM00382">
    <property type="entry name" value="AAA"/>
    <property type="match status" value="1"/>
</dbReference>
<dbReference type="SUPFAM" id="SSF50331">
    <property type="entry name" value="MOP-like"/>
    <property type="match status" value="1"/>
</dbReference>
<dbReference type="SUPFAM" id="SSF52540">
    <property type="entry name" value="P-loop containing nucleoside triphosphate hydrolases"/>
    <property type="match status" value="1"/>
</dbReference>
<dbReference type="PROSITE" id="PS00211">
    <property type="entry name" value="ABC_TRANSPORTER_1"/>
    <property type="match status" value="1"/>
</dbReference>
<dbReference type="PROSITE" id="PS50893">
    <property type="entry name" value="ABC_TRANSPORTER_2"/>
    <property type="match status" value="1"/>
</dbReference>
<dbReference type="PROSITE" id="PS51241">
    <property type="entry name" value="MODC"/>
    <property type="match status" value="1"/>
</dbReference>
<dbReference type="PROSITE" id="PS51866">
    <property type="entry name" value="MOP"/>
    <property type="match status" value="1"/>
</dbReference>
<evidence type="ECO:0000255" key="1">
    <source>
        <dbReference type="HAMAP-Rule" id="MF_01705"/>
    </source>
</evidence>
<evidence type="ECO:0000255" key="2">
    <source>
        <dbReference type="PROSITE-ProRule" id="PRU01213"/>
    </source>
</evidence>
<evidence type="ECO:0000305" key="3"/>
<name>MODC1_AZOVI</name>
<protein>
    <recommendedName>
        <fullName evidence="1">Molybdenum import ATP-binding protein ModC 1</fullName>
        <ecNumber evidence="1">7.3.2.5</ecNumber>
    </recommendedName>
</protein>
<accession>P37732</accession>
<keyword id="KW-0067">ATP-binding</keyword>
<keyword id="KW-0997">Cell inner membrane</keyword>
<keyword id="KW-1003">Cell membrane</keyword>
<keyword id="KW-0472">Membrane</keyword>
<keyword id="KW-0500">Molybdenum</keyword>
<keyword id="KW-0547">Nucleotide-binding</keyword>
<keyword id="KW-1278">Translocase</keyword>
<keyword id="KW-0813">Transport</keyword>
<organism>
    <name type="scientific">Azotobacter vinelandii</name>
    <dbReference type="NCBI Taxonomy" id="354"/>
    <lineage>
        <taxon>Bacteria</taxon>
        <taxon>Pseudomonadati</taxon>
        <taxon>Pseudomonadota</taxon>
        <taxon>Gammaproteobacteria</taxon>
        <taxon>Pseudomonadales</taxon>
        <taxon>Pseudomonadaceae</taxon>
        <taxon>Azotobacter</taxon>
    </lineage>
</organism>
<gene>
    <name evidence="1" type="primary">modC1</name>
    <name type="synonym">modC</name>
    <name type="synonym">modD</name>
</gene>
<feature type="chain" id="PRO_0000092528" description="Molybdenum import ATP-binding protein ModC 1">
    <location>
        <begin position="1"/>
        <end position="361"/>
    </location>
</feature>
<feature type="domain" description="ABC transporter" evidence="1">
    <location>
        <begin position="1"/>
        <end position="237"/>
    </location>
</feature>
<feature type="domain" description="Mop" evidence="2">
    <location>
        <begin position="296"/>
        <end position="361"/>
    </location>
</feature>
<feature type="binding site" evidence="1">
    <location>
        <begin position="35"/>
        <end position="42"/>
    </location>
    <ligand>
        <name>ATP</name>
        <dbReference type="ChEBI" id="CHEBI:30616"/>
    </ligand>
</feature>
<comment type="function">
    <text evidence="1">Part of the ABC transporter complex ModABC involved in molybdenum import. Responsible for energy coupling to the transport system.</text>
</comment>
<comment type="catalytic activity">
    <reaction evidence="1">
        <text>molybdate(out) + ATP + H2O = molybdate(in) + ADP + phosphate + H(+)</text>
        <dbReference type="Rhea" id="RHEA:22020"/>
        <dbReference type="ChEBI" id="CHEBI:15377"/>
        <dbReference type="ChEBI" id="CHEBI:15378"/>
        <dbReference type="ChEBI" id="CHEBI:30616"/>
        <dbReference type="ChEBI" id="CHEBI:36264"/>
        <dbReference type="ChEBI" id="CHEBI:43474"/>
        <dbReference type="ChEBI" id="CHEBI:456216"/>
        <dbReference type="EC" id="7.3.2.5"/>
    </reaction>
</comment>
<comment type="subunit">
    <text evidence="1">The complex is composed of two ATP-binding proteins (ModC), two transmembrane proteins (ModB) and a solute-binding protein (ModA).</text>
</comment>
<comment type="subcellular location">
    <subcellularLocation>
        <location evidence="1">Cell inner membrane</location>
        <topology evidence="1">Peripheral membrane protein</topology>
    </subcellularLocation>
</comment>
<comment type="similarity">
    <text evidence="1">Belongs to the ABC transporter superfamily. Molybdate importer (TC 3.A.1.8) family.</text>
</comment>
<comment type="sequence caution" evidence="3">
    <conflict type="erroneous initiation">
        <sequence resource="EMBL-CDS" id="CAA48821"/>
    </conflict>
</comment>
<reference key="1">
    <citation type="journal article" date="1993" name="Mol. Microbiol.">
        <title>Characterization of genes involved in molybdenum transport in Azotobacter vinelandii.</title>
        <authorList>
            <person name="Luque F."/>
            <person name="Mitchenall L.A."/>
            <person name="Chapman M."/>
            <person name="Christine R."/>
            <person name="Pau R.N."/>
        </authorList>
    </citation>
    <scope>NUCLEOTIDE SEQUENCE [GENOMIC DNA]</scope>
    <source>
        <strain>DJ35</strain>
    </source>
</reference>
<reference key="2">
    <citation type="journal article" date="1995" name="J. Bacteriol.">
        <title>Mutational analysis of genes of the mod locus involved in molybdenum transport, homeostasis, and processing in Azotobacter vinelandii.</title>
        <authorList>
            <person name="Mouncey N.J."/>
            <person name="Mitchenall L.A."/>
            <person name="Pau R.N."/>
        </authorList>
    </citation>
    <scope>GENE NAME</scope>
</reference>
<sequence length="361" mass="39769">MPADGIRARFRVDYAGFALDVDLTLPGHGVTALFGHSGSGKTTLLRCVAGLERAAEARLEINGELWQDSAAGVFLPTHRRALGYVFQEASLFPHLSVRRNLEYGMKRVDAASRQVSWERVLELLGIGHLLERLPGRLSGGERQRVGIARALLTSPRLLLMDEPLAALDLKRKNEILPYLERLHDELDIPMLFVSHLPDEVARLADHVVLLDQGRVTAQGSLQDIMARLDLPTAFHEDAGVVIESVVAEHDDHYHLTRLAFPGGAVLVARRPEAPGQRLRLRVHARDVSLANSRIEDSSITNVLPATVREVVEADTPAHVLVRLEAEGTPLIARITRRSCDQLGIAPGRRMWAQIKAVALLG</sequence>